<protein>
    <recommendedName>
        <fullName evidence="1">ATP synthase subunit b</fullName>
    </recommendedName>
    <alternativeName>
        <fullName evidence="1">ATP synthase F(0) sector subunit b</fullName>
    </alternativeName>
    <alternativeName>
        <fullName evidence="1">ATPase subunit I</fullName>
    </alternativeName>
    <alternativeName>
        <fullName evidence="1">F-type ATPase subunit b</fullName>
        <shortName evidence="1">F-ATPase subunit b</shortName>
    </alternativeName>
</protein>
<dbReference type="EMBL" id="AM295007">
    <property type="protein sequence ID" value="CAM30555.1"/>
    <property type="molecule type" value="Genomic_DNA"/>
</dbReference>
<dbReference type="RefSeq" id="WP_002985242.1">
    <property type="nucleotide sequence ID" value="NC_009332.1"/>
</dbReference>
<dbReference type="SMR" id="A2RFC6"/>
<dbReference type="KEGG" id="spf:SpyM51231"/>
<dbReference type="HOGENOM" id="CLU_079215_4_2_9"/>
<dbReference type="GO" id="GO:0005886">
    <property type="term" value="C:plasma membrane"/>
    <property type="evidence" value="ECO:0007669"/>
    <property type="project" value="UniProtKB-SubCell"/>
</dbReference>
<dbReference type="GO" id="GO:0045259">
    <property type="term" value="C:proton-transporting ATP synthase complex"/>
    <property type="evidence" value="ECO:0007669"/>
    <property type="project" value="UniProtKB-KW"/>
</dbReference>
<dbReference type="GO" id="GO:0046933">
    <property type="term" value="F:proton-transporting ATP synthase activity, rotational mechanism"/>
    <property type="evidence" value="ECO:0007669"/>
    <property type="project" value="UniProtKB-UniRule"/>
</dbReference>
<dbReference type="GO" id="GO:0046961">
    <property type="term" value="F:proton-transporting ATPase activity, rotational mechanism"/>
    <property type="evidence" value="ECO:0007669"/>
    <property type="project" value="TreeGrafter"/>
</dbReference>
<dbReference type="CDD" id="cd06503">
    <property type="entry name" value="ATP-synt_Fo_b"/>
    <property type="match status" value="1"/>
</dbReference>
<dbReference type="HAMAP" id="MF_01398">
    <property type="entry name" value="ATP_synth_b_bprime"/>
    <property type="match status" value="1"/>
</dbReference>
<dbReference type="InterPro" id="IPR028987">
    <property type="entry name" value="ATP_synth_B-like_membr_sf"/>
</dbReference>
<dbReference type="InterPro" id="IPR002146">
    <property type="entry name" value="ATP_synth_b/b'su_bac/chlpt"/>
</dbReference>
<dbReference type="InterPro" id="IPR005864">
    <property type="entry name" value="ATP_synth_F0_bsu_bac"/>
</dbReference>
<dbReference type="InterPro" id="IPR050059">
    <property type="entry name" value="ATP_synthase_B_chain"/>
</dbReference>
<dbReference type="NCBIfam" id="TIGR01144">
    <property type="entry name" value="ATP_synt_b"/>
    <property type="match status" value="1"/>
</dbReference>
<dbReference type="PANTHER" id="PTHR33445:SF1">
    <property type="entry name" value="ATP SYNTHASE SUBUNIT B"/>
    <property type="match status" value="1"/>
</dbReference>
<dbReference type="PANTHER" id="PTHR33445">
    <property type="entry name" value="ATP SYNTHASE SUBUNIT B', CHLOROPLASTIC"/>
    <property type="match status" value="1"/>
</dbReference>
<dbReference type="Pfam" id="PF00430">
    <property type="entry name" value="ATP-synt_B"/>
    <property type="match status" value="1"/>
</dbReference>
<dbReference type="SUPFAM" id="SSF81573">
    <property type="entry name" value="F1F0 ATP synthase subunit B, membrane domain"/>
    <property type="match status" value="1"/>
</dbReference>
<proteinExistence type="inferred from homology"/>
<gene>
    <name evidence="1" type="primary">atpF</name>
    <name type="ordered locus">SpyM51231</name>
</gene>
<feature type="chain" id="PRO_5000221519" description="ATP synthase subunit b">
    <location>
        <begin position="1"/>
        <end position="164"/>
    </location>
</feature>
<feature type="transmembrane region" description="Helical" evidence="1">
    <location>
        <begin position="6"/>
        <end position="26"/>
    </location>
</feature>
<keyword id="KW-0066">ATP synthesis</keyword>
<keyword id="KW-1003">Cell membrane</keyword>
<keyword id="KW-0138">CF(0)</keyword>
<keyword id="KW-0375">Hydrogen ion transport</keyword>
<keyword id="KW-0406">Ion transport</keyword>
<keyword id="KW-0472">Membrane</keyword>
<keyword id="KW-0812">Transmembrane</keyword>
<keyword id="KW-1133">Transmembrane helix</keyword>
<keyword id="KW-0813">Transport</keyword>
<accession>A2RFC6</accession>
<comment type="function">
    <text evidence="1">F(1)F(0) ATP synthase produces ATP from ADP in the presence of a proton or sodium gradient. F-type ATPases consist of two structural domains, F(1) containing the extramembraneous catalytic core and F(0) containing the membrane proton channel, linked together by a central stalk and a peripheral stalk. During catalysis, ATP synthesis in the catalytic domain of F(1) is coupled via a rotary mechanism of the central stalk subunits to proton translocation.</text>
</comment>
<comment type="function">
    <text evidence="1">Component of the F(0) channel, it forms part of the peripheral stalk, linking F(1) to F(0).</text>
</comment>
<comment type="subunit">
    <text evidence="1">F-type ATPases have 2 components, F(1) - the catalytic core - and F(0) - the membrane proton channel. F(1) has five subunits: alpha(3), beta(3), gamma(1), delta(1), epsilon(1). F(0) has three main subunits: a(1), b(2) and c(10-14). The alpha and beta chains form an alternating ring which encloses part of the gamma chain. F(1) is attached to F(0) by a central stalk formed by the gamma and epsilon chains, while a peripheral stalk is formed by the delta and b chains.</text>
</comment>
<comment type="subcellular location">
    <subcellularLocation>
        <location evidence="1">Cell membrane</location>
        <topology evidence="1">Single-pass membrane protein</topology>
    </subcellularLocation>
</comment>
<comment type="similarity">
    <text evidence="1">Belongs to the ATPase B chain family.</text>
</comment>
<reference key="1">
    <citation type="journal article" date="2007" name="J. Bacteriol.">
        <title>Complete genome of acute rheumatic fever-associated serotype M5 Streptococcus pyogenes strain Manfredo.</title>
        <authorList>
            <person name="Holden M.T.G."/>
            <person name="Scott A."/>
            <person name="Cherevach I."/>
            <person name="Chillingworth T."/>
            <person name="Churcher C."/>
            <person name="Cronin A."/>
            <person name="Dowd L."/>
            <person name="Feltwell T."/>
            <person name="Hamlin N."/>
            <person name="Holroyd S."/>
            <person name="Jagels K."/>
            <person name="Moule S."/>
            <person name="Mungall K."/>
            <person name="Quail M.A."/>
            <person name="Price C."/>
            <person name="Rabbinowitsch E."/>
            <person name="Sharp S."/>
            <person name="Skelton J."/>
            <person name="Whitehead S."/>
            <person name="Barrell B.G."/>
            <person name="Kehoe M."/>
            <person name="Parkhill J."/>
        </authorList>
    </citation>
    <scope>NUCLEOTIDE SEQUENCE [LARGE SCALE GENOMIC DNA]</scope>
    <source>
        <strain>Manfredo</strain>
    </source>
</reference>
<name>ATPF_STRPG</name>
<organism>
    <name type="scientific">Streptococcus pyogenes serotype M5 (strain Manfredo)</name>
    <dbReference type="NCBI Taxonomy" id="160491"/>
    <lineage>
        <taxon>Bacteria</taxon>
        <taxon>Bacillati</taxon>
        <taxon>Bacillota</taxon>
        <taxon>Bacilli</taxon>
        <taxon>Lactobacillales</taxon>
        <taxon>Streptococcaceae</taxon>
        <taxon>Streptococcus</taxon>
    </lineage>
</organism>
<sequence>MSITFGELVGNFILVTGSVIVLLLLIKKFAWGAIESILQTRSQQISRDIDQAEQSRLSAQQLETKSQANLDASRSQASKIISDAKEIGQLQGDKLVAEATDEAKRLKEKALTDIEQSKSDAISAVKTEMSDLTVLLAEKIMGANLDKTAQSQLIDSYLDDLGEA</sequence>
<evidence type="ECO:0000255" key="1">
    <source>
        <dbReference type="HAMAP-Rule" id="MF_01398"/>
    </source>
</evidence>